<keyword id="KW-0143">Chaperone</keyword>
<keyword id="KW-0963">Cytoplasm</keyword>
<keyword id="KW-0235">DNA replication</keyword>
<keyword id="KW-0479">Metal-binding</keyword>
<keyword id="KW-1185">Reference proteome</keyword>
<keyword id="KW-0677">Repeat</keyword>
<keyword id="KW-0346">Stress response</keyword>
<keyword id="KW-0862">Zinc</keyword>
<keyword id="KW-0863">Zinc-finger</keyword>
<gene>
    <name evidence="1" type="primary">dnaJ</name>
    <name type="ordered locus">SSP1178</name>
</gene>
<comment type="function">
    <text evidence="1">Participates actively in the response to hyperosmotic and heat shock by preventing the aggregation of stress-denatured proteins and by disaggregating proteins, also in an autonomous, DnaK-independent fashion. Unfolded proteins bind initially to DnaJ; upon interaction with the DnaJ-bound protein, DnaK hydrolyzes its bound ATP, resulting in the formation of a stable complex. GrpE releases ADP from DnaK; ATP binding to DnaK triggers the release of the substrate protein, thus completing the reaction cycle. Several rounds of ATP-dependent interactions between DnaJ, DnaK and GrpE are required for fully efficient folding. Also involved, together with DnaK and GrpE, in the DNA replication of plasmids through activation of initiation proteins.</text>
</comment>
<comment type="cofactor">
    <cofactor evidence="1">
        <name>Zn(2+)</name>
        <dbReference type="ChEBI" id="CHEBI:29105"/>
    </cofactor>
    <text evidence="1">Binds 2 Zn(2+) ions per monomer.</text>
</comment>
<comment type="subunit">
    <text evidence="1">Homodimer.</text>
</comment>
<comment type="subcellular location">
    <subcellularLocation>
        <location evidence="1">Cytoplasm</location>
    </subcellularLocation>
</comment>
<comment type="domain">
    <text evidence="1">The J domain is necessary and sufficient to stimulate DnaK ATPase activity. Zinc center 1 plays an important role in the autonomous, DnaK-independent chaperone activity of DnaJ. Zinc center 2 is essential for interaction with DnaK and for DnaJ activity.</text>
</comment>
<comment type="similarity">
    <text evidence="1">Belongs to the DnaJ family.</text>
</comment>
<accession>Q49Y21</accession>
<name>DNAJ_STAS1</name>
<feature type="chain" id="PRO_1000085316" description="Chaperone protein DnaJ">
    <location>
        <begin position="1"/>
        <end position="378"/>
    </location>
</feature>
<feature type="domain" description="J" evidence="1">
    <location>
        <begin position="5"/>
        <end position="69"/>
    </location>
</feature>
<feature type="repeat" description="CXXCXGXG motif">
    <location>
        <begin position="148"/>
        <end position="155"/>
    </location>
</feature>
<feature type="repeat" description="CXXCXGXG motif">
    <location>
        <begin position="165"/>
        <end position="172"/>
    </location>
</feature>
<feature type="repeat" description="CXXCXGXG motif">
    <location>
        <begin position="191"/>
        <end position="198"/>
    </location>
</feature>
<feature type="repeat" description="CXXCXGXG motif">
    <location>
        <begin position="205"/>
        <end position="212"/>
    </location>
</feature>
<feature type="zinc finger region" description="CR-type" evidence="1">
    <location>
        <begin position="135"/>
        <end position="217"/>
    </location>
</feature>
<feature type="binding site" evidence="1">
    <location>
        <position position="148"/>
    </location>
    <ligand>
        <name>Zn(2+)</name>
        <dbReference type="ChEBI" id="CHEBI:29105"/>
        <label>1</label>
    </ligand>
</feature>
<feature type="binding site" evidence="1">
    <location>
        <position position="151"/>
    </location>
    <ligand>
        <name>Zn(2+)</name>
        <dbReference type="ChEBI" id="CHEBI:29105"/>
        <label>1</label>
    </ligand>
</feature>
<feature type="binding site" evidence="1">
    <location>
        <position position="165"/>
    </location>
    <ligand>
        <name>Zn(2+)</name>
        <dbReference type="ChEBI" id="CHEBI:29105"/>
        <label>2</label>
    </ligand>
</feature>
<feature type="binding site" evidence="1">
    <location>
        <position position="168"/>
    </location>
    <ligand>
        <name>Zn(2+)</name>
        <dbReference type="ChEBI" id="CHEBI:29105"/>
        <label>2</label>
    </ligand>
</feature>
<feature type="binding site" evidence="1">
    <location>
        <position position="191"/>
    </location>
    <ligand>
        <name>Zn(2+)</name>
        <dbReference type="ChEBI" id="CHEBI:29105"/>
        <label>2</label>
    </ligand>
</feature>
<feature type="binding site" evidence="1">
    <location>
        <position position="194"/>
    </location>
    <ligand>
        <name>Zn(2+)</name>
        <dbReference type="ChEBI" id="CHEBI:29105"/>
        <label>2</label>
    </ligand>
</feature>
<feature type="binding site" evidence="1">
    <location>
        <position position="205"/>
    </location>
    <ligand>
        <name>Zn(2+)</name>
        <dbReference type="ChEBI" id="CHEBI:29105"/>
        <label>1</label>
    </ligand>
</feature>
<feature type="binding site" evidence="1">
    <location>
        <position position="208"/>
    </location>
    <ligand>
        <name>Zn(2+)</name>
        <dbReference type="ChEBI" id="CHEBI:29105"/>
        <label>1</label>
    </ligand>
</feature>
<reference key="1">
    <citation type="journal article" date="2005" name="Proc. Natl. Acad. Sci. U.S.A.">
        <title>Whole genome sequence of Staphylococcus saprophyticus reveals the pathogenesis of uncomplicated urinary tract infection.</title>
        <authorList>
            <person name="Kuroda M."/>
            <person name="Yamashita A."/>
            <person name="Hirakawa H."/>
            <person name="Kumano M."/>
            <person name="Morikawa K."/>
            <person name="Higashide M."/>
            <person name="Maruyama A."/>
            <person name="Inose Y."/>
            <person name="Matoba K."/>
            <person name="Toh H."/>
            <person name="Kuhara S."/>
            <person name="Hattori M."/>
            <person name="Ohta T."/>
        </authorList>
    </citation>
    <scope>NUCLEOTIDE SEQUENCE [LARGE SCALE GENOMIC DNA]</scope>
    <source>
        <strain>ATCC 15305 / DSM 20229 / NCIMB 8711 / NCTC 7292 / S-41</strain>
    </source>
</reference>
<protein>
    <recommendedName>
        <fullName evidence="1">Chaperone protein DnaJ</fullName>
    </recommendedName>
</protein>
<dbReference type="EMBL" id="AP008934">
    <property type="protein sequence ID" value="BAE18323.1"/>
    <property type="molecule type" value="Genomic_DNA"/>
</dbReference>
<dbReference type="RefSeq" id="WP_011302993.1">
    <property type="nucleotide sequence ID" value="NZ_MTGA01000038.1"/>
</dbReference>
<dbReference type="SMR" id="Q49Y21"/>
<dbReference type="GeneID" id="66867407"/>
<dbReference type="KEGG" id="ssp:SSP1178"/>
<dbReference type="eggNOG" id="COG0484">
    <property type="taxonomic scope" value="Bacteria"/>
</dbReference>
<dbReference type="HOGENOM" id="CLU_017633_0_7_9"/>
<dbReference type="OrthoDB" id="9779889at2"/>
<dbReference type="Proteomes" id="UP000006371">
    <property type="component" value="Chromosome"/>
</dbReference>
<dbReference type="GO" id="GO:0005737">
    <property type="term" value="C:cytoplasm"/>
    <property type="evidence" value="ECO:0007669"/>
    <property type="project" value="UniProtKB-SubCell"/>
</dbReference>
<dbReference type="GO" id="GO:0005524">
    <property type="term" value="F:ATP binding"/>
    <property type="evidence" value="ECO:0007669"/>
    <property type="project" value="InterPro"/>
</dbReference>
<dbReference type="GO" id="GO:0031072">
    <property type="term" value="F:heat shock protein binding"/>
    <property type="evidence" value="ECO:0007669"/>
    <property type="project" value="InterPro"/>
</dbReference>
<dbReference type="GO" id="GO:0051082">
    <property type="term" value="F:unfolded protein binding"/>
    <property type="evidence" value="ECO:0007669"/>
    <property type="project" value="UniProtKB-UniRule"/>
</dbReference>
<dbReference type="GO" id="GO:0008270">
    <property type="term" value="F:zinc ion binding"/>
    <property type="evidence" value="ECO:0007669"/>
    <property type="project" value="UniProtKB-UniRule"/>
</dbReference>
<dbReference type="GO" id="GO:0051085">
    <property type="term" value="P:chaperone cofactor-dependent protein refolding"/>
    <property type="evidence" value="ECO:0007669"/>
    <property type="project" value="TreeGrafter"/>
</dbReference>
<dbReference type="GO" id="GO:0006260">
    <property type="term" value="P:DNA replication"/>
    <property type="evidence" value="ECO:0007669"/>
    <property type="project" value="UniProtKB-KW"/>
</dbReference>
<dbReference type="GO" id="GO:0042026">
    <property type="term" value="P:protein refolding"/>
    <property type="evidence" value="ECO:0007669"/>
    <property type="project" value="TreeGrafter"/>
</dbReference>
<dbReference type="GO" id="GO:0009408">
    <property type="term" value="P:response to heat"/>
    <property type="evidence" value="ECO:0007669"/>
    <property type="project" value="InterPro"/>
</dbReference>
<dbReference type="CDD" id="cd06257">
    <property type="entry name" value="DnaJ"/>
    <property type="match status" value="1"/>
</dbReference>
<dbReference type="CDD" id="cd10747">
    <property type="entry name" value="DnaJ_C"/>
    <property type="match status" value="1"/>
</dbReference>
<dbReference type="CDD" id="cd10719">
    <property type="entry name" value="DnaJ_zf"/>
    <property type="match status" value="1"/>
</dbReference>
<dbReference type="FunFam" id="1.10.287.110:FF:000031">
    <property type="entry name" value="Molecular chaperone DnaJ"/>
    <property type="match status" value="1"/>
</dbReference>
<dbReference type="FunFam" id="2.10.230.10:FF:000002">
    <property type="entry name" value="Molecular chaperone DnaJ"/>
    <property type="match status" value="1"/>
</dbReference>
<dbReference type="FunFam" id="2.60.260.20:FF:000004">
    <property type="entry name" value="Molecular chaperone DnaJ"/>
    <property type="match status" value="1"/>
</dbReference>
<dbReference type="Gene3D" id="1.10.287.110">
    <property type="entry name" value="DnaJ domain"/>
    <property type="match status" value="1"/>
</dbReference>
<dbReference type="Gene3D" id="2.10.230.10">
    <property type="entry name" value="Heat shock protein DnaJ, cysteine-rich domain"/>
    <property type="match status" value="1"/>
</dbReference>
<dbReference type="Gene3D" id="2.60.260.20">
    <property type="entry name" value="Urease metallochaperone UreE, N-terminal domain"/>
    <property type="match status" value="2"/>
</dbReference>
<dbReference type="HAMAP" id="MF_01152">
    <property type="entry name" value="DnaJ"/>
    <property type="match status" value="1"/>
</dbReference>
<dbReference type="InterPro" id="IPR012724">
    <property type="entry name" value="DnaJ"/>
</dbReference>
<dbReference type="InterPro" id="IPR002939">
    <property type="entry name" value="DnaJ_C"/>
</dbReference>
<dbReference type="InterPro" id="IPR001623">
    <property type="entry name" value="DnaJ_domain"/>
</dbReference>
<dbReference type="InterPro" id="IPR018253">
    <property type="entry name" value="DnaJ_domain_CS"/>
</dbReference>
<dbReference type="InterPro" id="IPR008971">
    <property type="entry name" value="HSP40/DnaJ_pept-bd"/>
</dbReference>
<dbReference type="InterPro" id="IPR001305">
    <property type="entry name" value="HSP_DnaJ_Cys-rich_dom"/>
</dbReference>
<dbReference type="InterPro" id="IPR036410">
    <property type="entry name" value="HSP_DnaJ_Cys-rich_dom_sf"/>
</dbReference>
<dbReference type="InterPro" id="IPR036869">
    <property type="entry name" value="J_dom_sf"/>
</dbReference>
<dbReference type="NCBIfam" id="TIGR02349">
    <property type="entry name" value="DnaJ_bact"/>
    <property type="match status" value="1"/>
</dbReference>
<dbReference type="NCBIfam" id="NF008035">
    <property type="entry name" value="PRK10767.1"/>
    <property type="match status" value="1"/>
</dbReference>
<dbReference type="NCBIfam" id="NF010869">
    <property type="entry name" value="PRK14276.1"/>
    <property type="match status" value="1"/>
</dbReference>
<dbReference type="NCBIfam" id="NF010873">
    <property type="entry name" value="PRK14280.1"/>
    <property type="match status" value="1"/>
</dbReference>
<dbReference type="PANTHER" id="PTHR43096:SF48">
    <property type="entry name" value="CHAPERONE PROTEIN DNAJ"/>
    <property type="match status" value="1"/>
</dbReference>
<dbReference type="PANTHER" id="PTHR43096">
    <property type="entry name" value="DNAJ HOMOLOG 1, MITOCHONDRIAL-RELATED"/>
    <property type="match status" value="1"/>
</dbReference>
<dbReference type="Pfam" id="PF00226">
    <property type="entry name" value="DnaJ"/>
    <property type="match status" value="1"/>
</dbReference>
<dbReference type="Pfam" id="PF01556">
    <property type="entry name" value="DnaJ_C"/>
    <property type="match status" value="1"/>
</dbReference>
<dbReference type="Pfam" id="PF00684">
    <property type="entry name" value="DnaJ_CXXCXGXG"/>
    <property type="match status" value="1"/>
</dbReference>
<dbReference type="PRINTS" id="PR00625">
    <property type="entry name" value="JDOMAIN"/>
</dbReference>
<dbReference type="SMART" id="SM00271">
    <property type="entry name" value="DnaJ"/>
    <property type="match status" value="1"/>
</dbReference>
<dbReference type="SUPFAM" id="SSF46565">
    <property type="entry name" value="Chaperone J-domain"/>
    <property type="match status" value="1"/>
</dbReference>
<dbReference type="SUPFAM" id="SSF57938">
    <property type="entry name" value="DnaJ/Hsp40 cysteine-rich domain"/>
    <property type="match status" value="1"/>
</dbReference>
<dbReference type="SUPFAM" id="SSF49493">
    <property type="entry name" value="HSP40/DnaJ peptide-binding domain"/>
    <property type="match status" value="2"/>
</dbReference>
<dbReference type="PROSITE" id="PS00636">
    <property type="entry name" value="DNAJ_1"/>
    <property type="match status" value="1"/>
</dbReference>
<dbReference type="PROSITE" id="PS50076">
    <property type="entry name" value="DNAJ_2"/>
    <property type="match status" value="1"/>
</dbReference>
<dbReference type="PROSITE" id="PS51188">
    <property type="entry name" value="ZF_CR"/>
    <property type="match status" value="1"/>
</dbReference>
<sequence>MAKRDYYEVLGVSKSASKDEIKKAYRKLSKQYHPDINKEEGADEKFKEISEAYEVLSDENKRANYDQFGHDGPQGGFGGQGFGGQDFSGFGGGGFEDIFSSFFGGGRQQRDPNAPRKGDDLQYTMTVTFDEAVFGSEKEISIRKDVACHTCDGEGAKPGTKKKTCHYCNGSGHVSVEQNTILGRVRTEKVCPVCSGSGQEFEEPCPTCHGKGTENKNVKISVTIPEGVDNEQQIRLAGEGAPGENGGPQGDLYIVFRVKPSEKFERDGDDIYYSLDISIAQATLGDEVKVPTLKGSVMLTIPAGTQTEKQFRLKEKGIKNVHGYGYGDLFININVVTPTKISDRQKELLREFAEIDGEELSEQPSNFRDKAKRFFKGE</sequence>
<organism>
    <name type="scientific">Staphylococcus saprophyticus subsp. saprophyticus (strain ATCC 15305 / DSM 20229 / NCIMB 8711 / NCTC 7292 / S-41)</name>
    <dbReference type="NCBI Taxonomy" id="342451"/>
    <lineage>
        <taxon>Bacteria</taxon>
        <taxon>Bacillati</taxon>
        <taxon>Bacillota</taxon>
        <taxon>Bacilli</taxon>
        <taxon>Bacillales</taxon>
        <taxon>Staphylococcaceae</taxon>
        <taxon>Staphylococcus</taxon>
    </lineage>
</organism>
<evidence type="ECO:0000255" key="1">
    <source>
        <dbReference type="HAMAP-Rule" id="MF_01152"/>
    </source>
</evidence>
<proteinExistence type="inferred from homology"/>